<reference key="1">
    <citation type="journal article" date="1986" name="J. Gen. Virol.">
        <title>Nucleotide sequence of a cloned hepatitis B virus genome, subtype ayr: comparison with genomes of the other three subtypes.</title>
        <authorList>
            <person name="Okamoto H."/>
            <person name="Imai M."/>
            <person name="Shimozaki M."/>
            <person name="Hoshi Y."/>
            <person name="Iizuka H."/>
            <person name="Gotanda T."/>
            <person name="Tsuda F."/>
            <person name="Miyakawa Y."/>
            <person name="Mayumi M."/>
        </authorList>
    </citation>
    <scope>NUCLEOTIDE SEQUENCE [GENOMIC DNA]</scope>
</reference>
<reference key="2">
    <citation type="journal article" date="1999" name="J. Cell Biol.">
        <title>Phosphorylation-dependent binding of hepatitis B virus core particles to the nuclear pore complex.</title>
        <authorList>
            <person name="Kann M."/>
            <person name="Sodeik B."/>
            <person name="Vlachou A."/>
            <person name="Gerlich W.H."/>
            <person name="Helenius A."/>
        </authorList>
    </citation>
    <scope>NUCLEAR LOCALIZATION SIGNAL</scope>
    <scope>INTERACTION WITH HOST IMPORTIN ALPHA</scope>
</reference>
<reference key="3">
    <citation type="journal article" date="2003" name="Proc. Natl. Acad. Sci. U.S.A.">
        <title>Nuclear import of hepatitis B virus capsids and release of the viral genome.</title>
        <authorList>
            <person name="Rabe B."/>
            <person name="Vlachou A."/>
            <person name="Pante N."/>
            <person name="Helenius A."/>
            <person name="Kann M."/>
        </authorList>
    </citation>
    <scope>FUNCTION</scope>
</reference>
<reference key="4">
    <citation type="journal article" date="2004" name="J. Virol.">
        <title>Itinerary of hepatitis B viruses: delineation of restriction points critical for infectious entry.</title>
        <authorList>
            <person name="Funk A."/>
            <person name="Mhamdi M."/>
            <person name="Lin L."/>
            <person name="Will H."/>
            <person name="Sirma H."/>
        </authorList>
    </citation>
    <scope>FUNCTION</scope>
</reference>
<reference key="5">
    <citation type="journal article" date="2010" name="PLoS Pathog.">
        <title>Nucleoporin 153 arrests the nuclear import of hepatitis B virus capsids in the nuclear basket.</title>
        <authorList>
            <person name="Schmitz A."/>
            <person name="Schwarz A."/>
            <person name="Foss M."/>
            <person name="Zhou L."/>
            <person name="Rabe B."/>
            <person name="Hoellenriegel J."/>
            <person name="Stoeber M."/>
            <person name="Pante N."/>
            <person name="Kann M."/>
        </authorList>
    </citation>
    <scope>FUNCTION</scope>
    <scope>INTERACTION WITH RAT NUP153</scope>
</reference>
<comment type="function">
    <text evidence="1 4 5 6">Self assembles to form an icosahedral capsid. Most capsids appear to be large particles with an icosahedral symmetry of T=4 and consist of 240 copies of capsid protein, though a fraction forms smaller T=3 particles consisting of 180 capsid proteins. Entering capsids are transported along microtubules to the nucleus. Phosphorylation of the capsid is thought to induce exposure of nuclear localization signal in the C-terminal portion of the capsid protein that allows binding to the nuclear pore complex via the importin (karyopherin-) alpha and beta. Capsids are imported in intact form through the nuclear pore into the nuclear basket, where it probably binds NUP153. Only capsids that contain the mature viral genome can release the viral DNA and capsid protein into the nucleoplasm. Immature capsids get stuck in the basket. Capsids encapsulate the pre-genomic RNA and the P protein. Pre-genomic RNA is reverse-transcribed into DNA while the capsid is still in the cytoplasm. The capsid can then either be directed to the nucleus, providing more genomes for transcription, or bud through the endoplasmic reticulum to provide new virions.</text>
</comment>
<comment type="subunit">
    <text evidence="1 3 6">Homodimerizes, then multimerizes. Interacts with cytosol exposed regions of viral L glycoprotein present in the reticulum-to-Golgi compartment. Interacts with human FLNB. Phosphorylated form interacts with host importin alpha; this interaction depends on the exposure of the NLS, which itself depends upon genome maturation and/or phosphorylation of the capsid protein. Interacts with host NUP153.</text>
</comment>
<comment type="subcellular location">
    <subcellularLocation>
        <location evidence="1">Virion</location>
    </subcellularLocation>
    <subcellularLocation>
        <location evidence="1">Host cytoplasm</location>
    </subcellularLocation>
</comment>
<comment type="alternative products">
    <event type="alternative initiation"/>
    <isoform>
        <id>Q76R61-1</id>
        <name>Capsid protein</name>
        <sequence type="displayed"/>
    </isoform>
    <isoform>
        <id>P0C767-1</id>
        <name>External core antigen</name>
        <sequence type="external"/>
    </isoform>
</comment>
<comment type="PTM">
    <text evidence="1">Phosphorylated by host SRPK1, SRPK2, and maybe protein kinase C or GAPDH. Phosphorylation is critical for pregenomic RNA packaging. Protein kinase C phosphorylation is stimulated by HBx protein and may play a role in transport of the viral genome to the nucleus at the late step during the viral replication cycle.</text>
</comment>
<comment type="similarity">
    <text evidence="1">Belongs to the orthohepadnavirus core antigen family.</text>
</comment>
<protein>
    <recommendedName>
        <fullName evidence="1">Capsid protein</fullName>
    </recommendedName>
    <alternativeName>
        <fullName evidence="1">Core antigen</fullName>
    </alternativeName>
    <alternativeName>
        <fullName evidence="1">Core protein</fullName>
    </alternativeName>
    <alternativeName>
        <fullName evidence="1">HBcAg</fullName>
    </alternativeName>
    <alternativeName>
        <fullName evidence="1">p21.5</fullName>
    </alternativeName>
</protein>
<name>CAPSD_HBVCJ</name>
<organism>
    <name type="scientific">Hepatitis B virus genotype C subtype ayr (isolate Human/Japan/Okamoto/-)</name>
    <name type="common">HBV-C</name>
    <dbReference type="NCBI Taxonomy" id="928302"/>
    <lineage>
        <taxon>Viruses</taxon>
        <taxon>Riboviria</taxon>
        <taxon>Pararnavirae</taxon>
        <taxon>Artverviricota</taxon>
        <taxon>Revtraviricetes</taxon>
        <taxon>Blubervirales</taxon>
        <taxon>Hepadnaviridae</taxon>
        <taxon>Orthohepadnavirus</taxon>
        <taxon>Hepatitis B virus</taxon>
        <taxon>hepatitis B virus genotype C</taxon>
    </lineage>
</organism>
<evidence type="ECO:0000255" key="1">
    <source>
        <dbReference type="HAMAP-Rule" id="MF_04076"/>
    </source>
</evidence>
<evidence type="ECO:0000256" key="2">
    <source>
        <dbReference type="SAM" id="MobiDB-lite"/>
    </source>
</evidence>
<evidence type="ECO:0000269" key="3">
    <source>
    </source>
</evidence>
<evidence type="ECO:0000269" key="4">
    <source>
    </source>
</evidence>
<evidence type="ECO:0000269" key="5">
    <source>
    </source>
</evidence>
<evidence type="ECO:0000269" key="6">
    <source>
    </source>
</evidence>
<evidence type="ECO:0007829" key="7">
    <source>
        <dbReference type="PDB" id="7ABL"/>
    </source>
</evidence>
<accession>Q76R61</accession>
<proteinExistence type="evidence at protein level"/>
<dbReference type="EMBL" id="X04615">
    <property type="protein sequence ID" value="CAA28289.1"/>
    <property type="molecule type" value="Genomic_DNA"/>
</dbReference>
<dbReference type="PDB" id="5E00">
    <property type="method" value="X-ray"/>
    <property type="resolution" value="1.70 A"/>
    <property type="chains" value="C=123-131"/>
</dbReference>
<dbReference type="PDB" id="7ABL">
    <property type="method" value="EM"/>
    <property type="resolution" value="3.20 A"/>
    <property type="chains" value="A/B/C/D=1-183"/>
</dbReference>
<dbReference type="PDBsum" id="5E00"/>
<dbReference type="PDBsum" id="7ABL"/>
<dbReference type="SMR" id="Q76R61"/>
<dbReference type="BindingDB" id="Q76R61"/>
<dbReference type="Proteomes" id="UP000008591">
    <property type="component" value="Segment"/>
</dbReference>
<dbReference type="GO" id="GO:0043657">
    <property type="term" value="C:host cell"/>
    <property type="evidence" value="ECO:0007669"/>
    <property type="project" value="GOC"/>
</dbReference>
<dbReference type="GO" id="GO:0030430">
    <property type="term" value="C:host cell cytoplasm"/>
    <property type="evidence" value="ECO:0007669"/>
    <property type="project" value="UniProtKB-SubCell"/>
</dbReference>
<dbReference type="GO" id="GO:0039619">
    <property type="term" value="C:T=4 icosahedral viral capsid"/>
    <property type="evidence" value="ECO:0007669"/>
    <property type="project" value="UniProtKB-UniRule"/>
</dbReference>
<dbReference type="GO" id="GO:0003677">
    <property type="term" value="F:DNA binding"/>
    <property type="evidence" value="ECO:0007669"/>
    <property type="project" value="UniProtKB-UniRule"/>
</dbReference>
<dbReference type="GO" id="GO:0003723">
    <property type="term" value="F:RNA binding"/>
    <property type="evidence" value="ECO:0007669"/>
    <property type="project" value="UniProtKB-UniRule"/>
</dbReference>
<dbReference type="GO" id="GO:0005198">
    <property type="term" value="F:structural molecule activity"/>
    <property type="evidence" value="ECO:0007669"/>
    <property type="project" value="UniProtKB-UniRule"/>
</dbReference>
<dbReference type="GO" id="GO:0075521">
    <property type="term" value="P:microtubule-dependent intracellular transport of viral material towards nucleus"/>
    <property type="evidence" value="ECO:0007669"/>
    <property type="project" value="UniProtKB-UniRule"/>
</dbReference>
<dbReference type="GO" id="GO:0046718">
    <property type="term" value="P:symbiont entry into host cell"/>
    <property type="evidence" value="ECO:0007669"/>
    <property type="project" value="UniProtKB-UniRule"/>
</dbReference>
<dbReference type="GO" id="GO:0075732">
    <property type="term" value="P:viral penetration into host nucleus"/>
    <property type="evidence" value="ECO:0007669"/>
    <property type="project" value="UniProtKB-UniRule"/>
</dbReference>
<dbReference type="FunFam" id="1.10.4090.10:FF:000001">
    <property type="entry name" value="Capsid protein"/>
    <property type="match status" value="1"/>
</dbReference>
<dbReference type="Gene3D" id="1.10.4090.10">
    <property type="entry name" value="Viral capsid, core domain supefamily, Hepatitis B virus"/>
    <property type="match status" value="1"/>
</dbReference>
<dbReference type="HAMAP" id="MF_04076">
    <property type="entry name" value="HBV_HBEAG"/>
    <property type="match status" value="1"/>
</dbReference>
<dbReference type="InterPro" id="IPR002006">
    <property type="entry name" value="Hepatitis_core"/>
</dbReference>
<dbReference type="InterPro" id="IPR036459">
    <property type="entry name" value="Viral_capsid_core_dom_sf_HBV"/>
</dbReference>
<dbReference type="Pfam" id="PF00906">
    <property type="entry name" value="Hepatitis_core"/>
    <property type="match status" value="3"/>
</dbReference>
<dbReference type="SUPFAM" id="SSF47852">
    <property type="entry name" value="Hepatitis B viral capsid (hbcag)"/>
    <property type="match status" value="1"/>
</dbReference>
<feature type="chain" id="PRO_0000390308" description="Capsid protein">
    <location>
        <begin position="1"/>
        <end position="183"/>
    </location>
</feature>
<feature type="repeat" description="1; half-length">
    <location>
        <begin position="155"/>
        <end position="161"/>
    </location>
</feature>
<feature type="repeat" description="2">
    <location>
        <begin position="162"/>
        <end position="169"/>
    </location>
</feature>
<feature type="repeat" description="3">
    <location>
        <begin position="170"/>
        <end position="177"/>
    </location>
</feature>
<feature type="region of interest" description="Disordered" evidence="2">
    <location>
        <begin position="136"/>
        <end position="183"/>
    </location>
</feature>
<feature type="region of interest" description="3 X 8 AA repeats of S-P-R-R-R-[PR]-S-Q">
    <location>
        <begin position="155"/>
        <end position="177"/>
    </location>
</feature>
<feature type="region of interest" description="RNA binding" evidence="1">
    <location>
        <begin position="177"/>
        <end position="183"/>
    </location>
</feature>
<feature type="short sequence motif" description="Bipartite nuclear localization signal" evidence="1">
    <location>
        <begin position="158"/>
        <end position="175"/>
    </location>
</feature>
<feature type="compositionally biased region" description="Basic residues" evidence="2">
    <location>
        <begin position="149"/>
        <end position="176"/>
    </location>
</feature>
<feature type="modified residue" description="Phosphoserine; by host" evidence="1">
    <location>
        <position position="155"/>
    </location>
</feature>
<feature type="modified residue" description="Phosphoserine; by host" evidence="1">
    <location>
        <position position="162"/>
    </location>
</feature>
<feature type="modified residue" description="Phosphoserine; by host" evidence="1">
    <location>
        <position position="170"/>
    </location>
</feature>
<feature type="helix" evidence="7">
    <location>
        <begin position="7"/>
        <end position="9"/>
    </location>
</feature>
<feature type="turn" evidence="7">
    <location>
        <begin position="13"/>
        <end position="17"/>
    </location>
</feature>
<feature type="helix" evidence="7">
    <location>
        <begin position="21"/>
        <end position="23"/>
    </location>
</feature>
<feature type="helix" evidence="7">
    <location>
        <begin position="27"/>
        <end position="37"/>
    </location>
</feature>
<feature type="turn" evidence="7">
    <location>
        <begin position="40"/>
        <end position="43"/>
    </location>
</feature>
<feature type="strand" evidence="7">
    <location>
        <begin position="44"/>
        <end position="46"/>
    </location>
</feature>
<feature type="helix" evidence="7">
    <location>
        <begin position="50"/>
        <end position="74"/>
    </location>
</feature>
<feature type="helix" evidence="7">
    <location>
        <begin position="79"/>
        <end position="91"/>
    </location>
</feature>
<feature type="helix" evidence="7">
    <location>
        <begin position="93"/>
        <end position="109"/>
    </location>
</feature>
<feature type="helix" evidence="7">
    <location>
        <begin position="112"/>
        <end position="127"/>
    </location>
</feature>
<keyword id="KW-0002">3D-structure</keyword>
<keyword id="KW-0024">Alternative initiation</keyword>
<keyword id="KW-0167">Capsid protein</keyword>
<keyword id="KW-1176">Cytoplasmic inwards viral transport</keyword>
<keyword id="KW-0238">DNA-binding</keyword>
<keyword id="KW-1035">Host cytoplasm</keyword>
<keyword id="KW-0945">Host-virus interaction</keyword>
<keyword id="KW-1177">Microtubular inwards viral transport</keyword>
<keyword id="KW-0597">Phosphoprotein</keyword>
<keyword id="KW-1185">Reference proteome</keyword>
<keyword id="KW-0677">Repeat</keyword>
<keyword id="KW-0694">RNA-binding</keyword>
<keyword id="KW-1144">T=4 icosahedral capsid protein</keyword>
<keyword id="KW-1163">Viral penetration into host nucleus</keyword>
<keyword id="KW-0946">Virion</keyword>
<keyword id="KW-1160">Virus entry into host cell</keyword>
<sequence>MDIDPYKEFGASVELLSFLPSDFFPSIRDLLDTASALYREALESPEHCSPHHTALRQAILCWGELMNLATWVGSNLEDPASRELVVSYVNVNMGLKIRQLLWFHISCLTFGRETVLEYLVSFGVWIRTPPAYRPPNAPILSTLPETTVVRRRGRSPRRRTPSPRRRRSQSPRRRRSQSRESQC</sequence>
<gene>
    <name evidence="1" type="primary">C</name>
</gene>
<organismHost>
    <name type="scientific">Homo sapiens</name>
    <name type="common">Human</name>
    <dbReference type="NCBI Taxonomy" id="9606"/>
</organismHost>
<organismHost>
    <name type="scientific">Pan troglodytes</name>
    <name type="common">Chimpanzee</name>
    <dbReference type="NCBI Taxonomy" id="9598"/>
</organismHost>